<dbReference type="EMBL" id="AF114845">
    <property type="protein sequence ID" value="AAG27264.1"/>
    <property type="molecule type" value="Genomic_DNA"/>
</dbReference>
<dbReference type="RefSeq" id="WP_013243970.1">
    <property type="nucleotide sequence ID" value="NZ_VYIY01000003.1"/>
</dbReference>
<dbReference type="SMR" id="Q9FA04"/>
<dbReference type="GeneID" id="56439591"/>
<dbReference type="OMA" id="GKNIPCT"/>
<dbReference type="OrthoDB" id="9806135at2"/>
<dbReference type="GO" id="GO:0022625">
    <property type="term" value="C:cytosolic large ribosomal subunit"/>
    <property type="evidence" value="ECO:0007669"/>
    <property type="project" value="TreeGrafter"/>
</dbReference>
<dbReference type="GO" id="GO:0019843">
    <property type="term" value="F:rRNA binding"/>
    <property type="evidence" value="ECO:0007669"/>
    <property type="project" value="UniProtKB-UniRule"/>
</dbReference>
<dbReference type="GO" id="GO:0003735">
    <property type="term" value="F:structural constituent of ribosome"/>
    <property type="evidence" value="ECO:0007669"/>
    <property type="project" value="InterPro"/>
</dbReference>
<dbReference type="GO" id="GO:0006412">
    <property type="term" value="P:translation"/>
    <property type="evidence" value="ECO:0007669"/>
    <property type="project" value="UniProtKB-UniRule"/>
</dbReference>
<dbReference type="FunFam" id="2.40.30.10:FF:000004">
    <property type="entry name" value="50S ribosomal protein L3"/>
    <property type="match status" value="1"/>
</dbReference>
<dbReference type="FunFam" id="3.30.160.810:FF:000001">
    <property type="entry name" value="50S ribosomal protein L3"/>
    <property type="match status" value="1"/>
</dbReference>
<dbReference type="Gene3D" id="3.30.160.810">
    <property type="match status" value="1"/>
</dbReference>
<dbReference type="Gene3D" id="2.40.30.10">
    <property type="entry name" value="Translation factors"/>
    <property type="match status" value="1"/>
</dbReference>
<dbReference type="HAMAP" id="MF_01325_B">
    <property type="entry name" value="Ribosomal_uL3_B"/>
    <property type="match status" value="1"/>
</dbReference>
<dbReference type="InterPro" id="IPR000597">
    <property type="entry name" value="Ribosomal_uL3"/>
</dbReference>
<dbReference type="InterPro" id="IPR019927">
    <property type="entry name" value="Ribosomal_uL3_bac/org-type"/>
</dbReference>
<dbReference type="InterPro" id="IPR019926">
    <property type="entry name" value="Ribosomal_uL3_CS"/>
</dbReference>
<dbReference type="InterPro" id="IPR009000">
    <property type="entry name" value="Transl_B-barrel_sf"/>
</dbReference>
<dbReference type="NCBIfam" id="TIGR03625">
    <property type="entry name" value="L3_bact"/>
    <property type="match status" value="1"/>
</dbReference>
<dbReference type="PANTHER" id="PTHR11229">
    <property type="entry name" value="50S RIBOSOMAL PROTEIN L3"/>
    <property type="match status" value="1"/>
</dbReference>
<dbReference type="PANTHER" id="PTHR11229:SF16">
    <property type="entry name" value="LARGE RIBOSOMAL SUBUNIT PROTEIN UL3C"/>
    <property type="match status" value="1"/>
</dbReference>
<dbReference type="Pfam" id="PF00297">
    <property type="entry name" value="Ribosomal_L3"/>
    <property type="match status" value="1"/>
</dbReference>
<dbReference type="SUPFAM" id="SSF50447">
    <property type="entry name" value="Translation proteins"/>
    <property type="match status" value="1"/>
</dbReference>
<dbReference type="PROSITE" id="PS00474">
    <property type="entry name" value="RIBOSOMAL_L3"/>
    <property type="match status" value="1"/>
</dbReference>
<comment type="function">
    <text evidence="1">One of the primary rRNA binding proteins, it binds directly near the 3'-end of the 23S rRNA, where it nucleates assembly of the 50S subunit.</text>
</comment>
<comment type="subunit">
    <text evidence="1">Part of the 50S ribosomal subunit. Forms a cluster with proteins L14 and L19.</text>
</comment>
<comment type="similarity">
    <text evidence="1">Belongs to the universal ribosomal protein uL3 family.</text>
</comment>
<organism>
    <name type="scientific">Brachyspira pilosicoli</name>
    <name type="common">Serpulina pilosicoli</name>
    <dbReference type="NCBI Taxonomy" id="52584"/>
    <lineage>
        <taxon>Bacteria</taxon>
        <taxon>Pseudomonadati</taxon>
        <taxon>Spirochaetota</taxon>
        <taxon>Spirochaetia</taxon>
        <taxon>Brachyspirales</taxon>
        <taxon>Brachyspiraceae</taxon>
        <taxon>Brachyspira</taxon>
    </lineage>
</organism>
<accession>Q9FA04</accession>
<feature type="chain" id="PRO_0000077074" description="Large ribosomal subunit protein uL3">
    <location>
        <begin position="1"/>
        <end position="218"/>
    </location>
</feature>
<protein>
    <recommendedName>
        <fullName evidence="1">Large ribosomal subunit protein uL3</fullName>
    </recommendedName>
    <alternativeName>
        <fullName evidence="2">50S ribosomal protein L3</fullName>
    </alternativeName>
</protein>
<keyword id="KW-0687">Ribonucleoprotein</keyword>
<keyword id="KW-0689">Ribosomal protein</keyword>
<keyword id="KW-0694">RNA-binding</keyword>
<keyword id="KW-0699">rRNA-binding</keyword>
<proteinExistence type="inferred from homology"/>
<sequence>MVGIIGRKLGMTTVFDETGNAIAVTVVEAGPCTVMQVRDNEKDGYNAIQLGYGAVKEKHLKKPQIGQFKKANLEPKKYLKEFRLDDSSAYTVGQELKVDIFQAGDFIDVSSLSKGRGFAGVMKRHNYDGGPMSHGSNFRRRAGSIGCNSYPARVWKGKGMPGHMGNTLTTIQNLKVVEIRPEDNLIMIKGSIPGAINGIVKITQAAKKKNKKKNSMTK</sequence>
<name>RL3_BRAPL</name>
<gene>
    <name evidence="1" type="primary">rplC</name>
</gene>
<reference key="1">
    <citation type="submission" date="1998-12" db="EMBL/GenBank/DDBJ databases">
        <title>A gene cluster of ribosomal proteins in Brachyspira pilosicoli.</title>
        <authorList>
            <person name="Rayment S.J."/>
            <person name="Livesley M.A."/>
        </authorList>
    </citation>
    <scope>NUCLEOTIDE SEQUENCE [GENOMIC DNA]</scope>
    <source>
        <strain>ATCC 51139 / P43/6/78</strain>
    </source>
</reference>
<evidence type="ECO:0000255" key="1">
    <source>
        <dbReference type="HAMAP-Rule" id="MF_01325"/>
    </source>
</evidence>
<evidence type="ECO:0000305" key="2"/>